<organism>
    <name type="scientific">Bacillus thuringiensis subsp. konkukian (strain 97-27)</name>
    <dbReference type="NCBI Taxonomy" id="281309"/>
    <lineage>
        <taxon>Bacteria</taxon>
        <taxon>Bacillati</taxon>
        <taxon>Bacillota</taxon>
        <taxon>Bacilli</taxon>
        <taxon>Bacillales</taxon>
        <taxon>Bacillaceae</taxon>
        <taxon>Bacillus</taxon>
        <taxon>Bacillus cereus group</taxon>
    </lineage>
</organism>
<gene>
    <name evidence="1" type="primary">infA</name>
    <name type="ordered locus">BT9727_0129</name>
</gene>
<accession>Q6HPN5</accession>
<sequence length="72" mass="8186">MAKDDVIEVEGTVLETLPNAMFKVELENGHVVLAHVSGKIRMNFIRILPGDKVTVELSPYDLNRGRITYRFK</sequence>
<protein>
    <recommendedName>
        <fullName evidence="1">Translation initiation factor IF-1</fullName>
    </recommendedName>
</protein>
<feature type="chain" id="PRO_0000095735" description="Translation initiation factor IF-1">
    <location>
        <begin position="1"/>
        <end position="72"/>
    </location>
</feature>
<feature type="domain" description="S1-like" evidence="1">
    <location>
        <begin position="1"/>
        <end position="72"/>
    </location>
</feature>
<feature type="modified residue" description="Phosphotyrosine" evidence="1">
    <location>
        <position position="60"/>
    </location>
</feature>
<comment type="function">
    <text evidence="1">One of the essential components for the initiation of protein synthesis. Stabilizes the binding of IF-2 and IF-3 on the 30S subunit to which N-formylmethionyl-tRNA(fMet) subsequently binds. Helps modulate mRNA selection, yielding the 30S pre-initiation complex (PIC). Upon addition of the 50S ribosomal subunit IF-1, IF-2 and IF-3 are released leaving the mature 70S translation initiation complex.</text>
</comment>
<comment type="subunit">
    <text evidence="1">Component of the 30S ribosomal translation pre-initiation complex which assembles on the 30S ribosome in the order IF-2 and IF-3, IF-1 and N-formylmethionyl-tRNA(fMet); mRNA recruitment can occur at any time during PIC assembly.</text>
</comment>
<comment type="subcellular location">
    <subcellularLocation>
        <location evidence="1">Cytoplasm</location>
    </subcellularLocation>
</comment>
<comment type="similarity">
    <text evidence="1">Belongs to the IF-1 family.</text>
</comment>
<reference key="1">
    <citation type="journal article" date="2006" name="J. Bacteriol.">
        <title>Pathogenomic sequence analysis of Bacillus cereus and Bacillus thuringiensis isolates closely related to Bacillus anthracis.</title>
        <authorList>
            <person name="Han C.S."/>
            <person name="Xie G."/>
            <person name="Challacombe J.F."/>
            <person name="Altherr M.R."/>
            <person name="Bhotika S.S."/>
            <person name="Bruce D."/>
            <person name="Campbell C.S."/>
            <person name="Campbell M.L."/>
            <person name="Chen J."/>
            <person name="Chertkov O."/>
            <person name="Cleland C."/>
            <person name="Dimitrijevic M."/>
            <person name="Doggett N.A."/>
            <person name="Fawcett J.J."/>
            <person name="Glavina T."/>
            <person name="Goodwin L.A."/>
            <person name="Hill K.K."/>
            <person name="Hitchcock P."/>
            <person name="Jackson P.J."/>
            <person name="Keim P."/>
            <person name="Kewalramani A.R."/>
            <person name="Longmire J."/>
            <person name="Lucas S."/>
            <person name="Malfatti S."/>
            <person name="McMurry K."/>
            <person name="Meincke L.J."/>
            <person name="Misra M."/>
            <person name="Moseman B.L."/>
            <person name="Mundt M."/>
            <person name="Munk A.C."/>
            <person name="Okinaka R.T."/>
            <person name="Parson-Quintana B."/>
            <person name="Reilly L.P."/>
            <person name="Richardson P."/>
            <person name="Robinson D.L."/>
            <person name="Rubin E."/>
            <person name="Saunders E."/>
            <person name="Tapia R."/>
            <person name="Tesmer J.G."/>
            <person name="Thayer N."/>
            <person name="Thompson L.S."/>
            <person name="Tice H."/>
            <person name="Ticknor L.O."/>
            <person name="Wills P.L."/>
            <person name="Brettin T.S."/>
            <person name="Gilna P."/>
        </authorList>
    </citation>
    <scope>NUCLEOTIDE SEQUENCE [LARGE SCALE GENOMIC DNA]</scope>
    <source>
        <strain>97-27</strain>
    </source>
</reference>
<evidence type="ECO:0000255" key="1">
    <source>
        <dbReference type="HAMAP-Rule" id="MF_00075"/>
    </source>
</evidence>
<dbReference type="EMBL" id="AE017355">
    <property type="protein sequence ID" value="AAT58919.1"/>
    <property type="molecule type" value="Genomic_DNA"/>
</dbReference>
<dbReference type="RefSeq" id="WP_001029884.1">
    <property type="nucleotide sequence ID" value="NC_005957.1"/>
</dbReference>
<dbReference type="RefSeq" id="YP_034485.1">
    <property type="nucleotide sequence ID" value="NC_005957.1"/>
</dbReference>
<dbReference type="SMR" id="Q6HPN5"/>
<dbReference type="GeneID" id="93010920"/>
<dbReference type="KEGG" id="btk:BT9727_0129"/>
<dbReference type="PATRIC" id="fig|281309.8.peg.130"/>
<dbReference type="HOGENOM" id="CLU_151267_1_0_9"/>
<dbReference type="PRO" id="PR:Q6HPN5"/>
<dbReference type="Proteomes" id="UP000001301">
    <property type="component" value="Chromosome"/>
</dbReference>
<dbReference type="GO" id="GO:0005829">
    <property type="term" value="C:cytosol"/>
    <property type="evidence" value="ECO:0007669"/>
    <property type="project" value="TreeGrafter"/>
</dbReference>
<dbReference type="GO" id="GO:0043022">
    <property type="term" value="F:ribosome binding"/>
    <property type="evidence" value="ECO:0007669"/>
    <property type="project" value="UniProtKB-UniRule"/>
</dbReference>
<dbReference type="GO" id="GO:0019843">
    <property type="term" value="F:rRNA binding"/>
    <property type="evidence" value="ECO:0007669"/>
    <property type="project" value="UniProtKB-UniRule"/>
</dbReference>
<dbReference type="GO" id="GO:0003743">
    <property type="term" value="F:translation initiation factor activity"/>
    <property type="evidence" value="ECO:0007669"/>
    <property type="project" value="UniProtKB-UniRule"/>
</dbReference>
<dbReference type="CDD" id="cd04451">
    <property type="entry name" value="S1_IF1"/>
    <property type="match status" value="1"/>
</dbReference>
<dbReference type="FunFam" id="2.40.50.140:FF:000002">
    <property type="entry name" value="Translation initiation factor IF-1"/>
    <property type="match status" value="1"/>
</dbReference>
<dbReference type="Gene3D" id="2.40.50.140">
    <property type="entry name" value="Nucleic acid-binding proteins"/>
    <property type="match status" value="1"/>
</dbReference>
<dbReference type="HAMAP" id="MF_00075">
    <property type="entry name" value="IF_1"/>
    <property type="match status" value="1"/>
</dbReference>
<dbReference type="InterPro" id="IPR012340">
    <property type="entry name" value="NA-bd_OB-fold"/>
</dbReference>
<dbReference type="InterPro" id="IPR006196">
    <property type="entry name" value="RNA-binding_domain_S1_IF1"/>
</dbReference>
<dbReference type="InterPro" id="IPR003029">
    <property type="entry name" value="S1_domain"/>
</dbReference>
<dbReference type="InterPro" id="IPR004368">
    <property type="entry name" value="TIF_IF1"/>
</dbReference>
<dbReference type="NCBIfam" id="TIGR00008">
    <property type="entry name" value="infA"/>
    <property type="match status" value="1"/>
</dbReference>
<dbReference type="PANTHER" id="PTHR33370">
    <property type="entry name" value="TRANSLATION INITIATION FACTOR IF-1, CHLOROPLASTIC"/>
    <property type="match status" value="1"/>
</dbReference>
<dbReference type="PANTHER" id="PTHR33370:SF1">
    <property type="entry name" value="TRANSLATION INITIATION FACTOR IF-1, CHLOROPLASTIC"/>
    <property type="match status" value="1"/>
</dbReference>
<dbReference type="Pfam" id="PF01176">
    <property type="entry name" value="eIF-1a"/>
    <property type="match status" value="1"/>
</dbReference>
<dbReference type="SMART" id="SM00316">
    <property type="entry name" value="S1"/>
    <property type="match status" value="1"/>
</dbReference>
<dbReference type="SUPFAM" id="SSF50249">
    <property type="entry name" value="Nucleic acid-binding proteins"/>
    <property type="match status" value="1"/>
</dbReference>
<dbReference type="PROSITE" id="PS50832">
    <property type="entry name" value="S1_IF1_TYPE"/>
    <property type="match status" value="1"/>
</dbReference>
<name>IF1_BACHK</name>
<proteinExistence type="inferred from homology"/>
<keyword id="KW-0963">Cytoplasm</keyword>
<keyword id="KW-0396">Initiation factor</keyword>
<keyword id="KW-0597">Phosphoprotein</keyword>
<keyword id="KW-0648">Protein biosynthesis</keyword>
<keyword id="KW-0694">RNA-binding</keyword>
<keyword id="KW-0699">rRNA-binding</keyword>